<gene>
    <name type="primary">Calr</name>
</gene>
<accession>P18418</accession>
<accession>P10452</accession>
<proteinExistence type="evidence at protein level"/>
<feature type="signal peptide" evidence="9 10 11">
    <location>
        <begin position="1"/>
        <end position="17"/>
    </location>
</feature>
<feature type="chain" id="PRO_0000004177" description="Calreticulin">
    <location>
        <begin position="18"/>
        <end position="416"/>
    </location>
</feature>
<feature type="repeat" description="1-1">
    <location>
        <begin position="191"/>
        <end position="202"/>
    </location>
</feature>
<feature type="repeat" description="1-2">
    <location>
        <begin position="210"/>
        <end position="221"/>
    </location>
</feature>
<feature type="repeat" description="1-3">
    <location>
        <begin position="227"/>
        <end position="238"/>
    </location>
</feature>
<feature type="repeat" description="1-4">
    <location>
        <begin position="244"/>
        <end position="255"/>
    </location>
</feature>
<feature type="repeat" description="2-1">
    <location>
        <begin position="259"/>
        <end position="269"/>
    </location>
</feature>
<feature type="repeat" description="2-2">
    <location>
        <begin position="273"/>
        <end position="283"/>
    </location>
</feature>
<feature type="repeat" description="2-3">
    <location>
        <begin position="287"/>
        <end position="297"/>
    </location>
</feature>
<feature type="region of interest" description="N-domain">
    <location>
        <begin position="18"/>
        <end position="197"/>
    </location>
</feature>
<feature type="region of interest" description="4 X approximate repeats">
    <location>
        <begin position="191"/>
        <end position="255"/>
    </location>
</feature>
<feature type="region of interest" description="Disordered" evidence="6">
    <location>
        <begin position="193"/>
        <end position="277"/>
    </location>
</feature>
<feature type="region of interest" description="P-domain">
    <location>
        <begin position="198"/>
        <end position="308"/>
    </location>
</feature>
<feature type="region of interest" description="Interaction with PPIB" evidence="1">
    <location>
        <begin position="237"/>
        <end position="270"/>
    </location>
</feature>
<feature type="region of interest" description="3 X approximate repeats">
    <location>
        <begin position="259"/>
        <end position="297"/>
    </location>
</feature>
<feature type="region of interest" description="C-domain">
    <location>
        <begin position="309"/>
        <end position="416"/>
    </location>
</feature>
<feature type="region of interest" description="Disordered" evidence="6">
    <location>
        <begin position="350"/>
        <end position="416"/>
    </location>
</feature>
<feature type="short sequence motif" description="Prevents secretion from ER">
    <location>
        <begin position="413"/>
        <end position="416"/>
    </location>
</feature>
<feature type="compositionally biased region" description="Basic and acidic residues" evidence="6">
    <location>
        <begin position="207"/>
        <end position="251"/>
    </location>
</feature>
<feature type="compositionally biased region" description="Acidic residues" evidence="6">
    <location>
        <begin position="252"/>
        <end position="261"/>
    </location>
</feature>
<feature type="compositionally biased region" description="Basic and acidic residues" evidence="6">
    <location>
        <begin position="352"/>
        <end position="379"/>
    </location>
</feature>
<feature type="compositionally biased region" description="Acidic residues" evidence="6">
    <location>
        <begin position="380"/>
        <end position="408"/>
    </location>
</feature>
<feature type="binding site" evidence="1">
    <location>
        <position position="26"/>
    </location>
    <ligand>
        <name>Ca(2+)</name>
        <dbReference type="ChEBI" id="CHEBI:29108"/>
    </ligand>
</feature>
<feature type="binding site" evidence="1">
    <location>
        <position position="62"/>
    </location>
    <ligand>
        <name>Ca(2+)</name>
        <dbReference type="ChEBI" id="CHEBI:29108"/>
    </ligand>
</feature>
<feature type="binding site" evidence="1">
    <location>
        <position position="64"/>
    </location>
    <ligand>
        <name>Ca(2+)</name>
        <dbReference type="ChEBI" id="CHEBI:29108"/>
    </ligand>
</feature>
<feature type="binding site" evidence="2">
    <location>
        <position position="109"/>
    </location>
    <ligand>
        <name>an alpha-D-glucoside</name>
        <dbReference type="ChEBI" id="CHEBI:22390"/>
    </ligand>
</feature>
<feature type="binding site" evidence="2">
    <location>
        <position position="111"/>
    </location>
    <ligand>
        <name>an alpha-D-glucoside</name>
        <dbReference type="ChEBI" id="CHEBI:22390"/>
    </ligand>
</feature>
<feature type="binding site" evidence="2">
    <location>
        <position position="128"/>
    </location>
    <ligand>
        <name>an alpha-D-glucoside</name>
        <dbReference type="ChEBI" id="CHEBI:22390"/>
    </ligand>
</feature>
<feature type="binding site" evidence="2">
    <location>
        <position position="135"/>
    </location>
    <ligand>
        <name>an alpha-D-glucoside</name>
        <dbReference type="ChEBI" id="CHEBI:22390"/>
    </ligand>
</feature>
<feature type="binding site" evidence="2">
    <location>
        <position position="317"/>
    </location>
    <ligand>
        <name>an alpha-D-glucoside</name>
        <dbReference type="ChEBI" id="CHEBI:22390"/>
    </ligand>
</feature>
<feature type="binding site" evidence="1">
    <location>
        <position position="328"/>
    </location>
    <ligand>
        <name>Ca(2+)</name>
        <dbReference type="ChEBI" id="CHEBI:29108"/>
    </ligand>
</feature>
<feature type="modified residue" description="N6-acetyllysine" evidence="3">
    <location>
        <position position="48"/>
    </location>
</feature>
<feature type="modified residue" description="N6-(2-hydroxyisobutyryl)lysine" evidence="3">
    <location>
        <position position="64"/>
    </location>
</feature>
<feature type="modified residue" description="N6-acetyllysine" evidence="3">
    <location>
        <position position="159"/>
    </location>
</feature>
<feature type="modified residue" description="N6-acetyllysine" evidence="3">
    <location>
        <position position="209"/>
    </location>
</feature>
<feature type="disulfide bond" evidence="1">
    <location>
        <begin position="105"/>
        <end position="137"/>
    </location>
</feature>
<feature type="sequence conflict" description="In Ref. 9; CAA31987." evidence="12" ref="9">
    <original>P</original>
    <variation>R</variation>
    <location>
        <position position="269"/>
    </location>
</feature>
<feature type="sequence conflict" description="In Ref. 9; CAA31987." evidence="12" ref="9">
    <original>DKQ</original>
    <variation>AAG</variation>
    <location>
        <begin position="359"/>
        <end position="361"/>
    </location>
</feature>
<feature type="turn" evidence="14">
    <location>
        <begin position="220"/>
        <end position="222"/>
    </location>
</feature>
<feature type="strand" evidence="13">
    <location>
        <begin position="223"/>
        <end position="225"/>
    </location>
</feature>
<feature type="turn" evidence="14">
    <location>
        <begin position="234"/>
        <end position="236"/>
    </location>
</feature>
<feature type="strand" evidence="13">
    <location>
        <begin position="240"/>
        <end position="243"/>
    </location>
</feature>
<feature type="helix" evidence="13">
    <location>
        <begin position="255"/>
        <end position="258"/>
    </location>
</feature>
<feature type="strand" evidence="13">
    <location>
        <begin position="265"/>
        <end position="267"/>
    </location>
</feature>
<feature type="strand" evidence="13">
    <location>
        <begin position="301"/>
        <end position="303"/>
    </location>
</feature>
<keyword id="KW-0002">3D-structure</keyword>
<keyword id="KW-0007">Acetylation</keyword>
<keyword id="KW-0106">Calcium</keyword>
<keyword id="KW-0143">Chaperone</keyword>
<keyword id="KW-0963">Cytoplasm</keyword>
<keyword id="KW-0968">Cytoplasmic vesicle</keyword>
<keyword id="KW-0903">Direct protein sequencing</keyword>
<keyword id="KW-1015">Disulfide bond</keyword>
<keyword id="KW-0256">Endoplasmic reticulum</keyword>
<keyword id="KW-0272">Extracellular matrix</keyword>
<keyword id="KW-0379">Hydroxylation</keyword>
<keyword id="KW-0430">Lectin</keyword>
<keyword id="KW-0458">Lysosome</keyword>
<keyword id="KW-0479">Metal-binding</keyword>
<keyword id="KW-1185">Reference proteome</keyword>
<keyword id="KW-0677">Repeat</keyword>
<keyword id="KW-0703">Sarcoplasmic reticulum</keyword>
<keyword id="KW-0964">Secreted</keyword>
<keyword id="KW-0732">Signal</keyword>
<keyword id="KW-0862">Zinc</keyword>
<comment type="function">
    <text evidence="3 4 5">Calcium-binding chaperone that promotes folding, oligomeric assembly and quality control in the endoplasmic reticulum (ER) via the calreticulin/calnexin cycle. This lectin interacts transiently with almost all of the monoglucosylated glycoproteins that are synthesized in the ER. Interacts with the DNA-binding domain of NR3C1 and mediates its nuclear export (By similarity). Involved in maternal gene expression regulation. May participate in oocyte maturation via the regulation of calcium homeostasis (By similarity). Present in the cortical granules of non-activated oocytes, is exocytosed during the cortical reaction in response to oocyte activation and might participate in the block to polyspermy (By similarity).</text>
</comment>
<comment type="subunit">
    <text evidence="2 3 7">Monomer. Component of an EIF2 complex at least composed of CELF1/CUGBP1, CALR, CALR3, EIF2S1, EIF2S2, HSP90B1 and HSPA5. Interacts with GABARAP, NR3C1 and TRIM21. Interacts with PPIB and SPACA9. Interacts (via P-domain) with PDIA5 (By similarity). Interacts with PDIA3/ERp57 (PubMed:11842220). Interacts with CLCC1 (By similarity).</text>
</comment>
<comment type="interaction">
    <interactant intactId="EBI-916742">
        <id>P18418</id>
    </interactant>
    <interactant intactId="EBI-979862">
        <id>P30101</id>
        <label>PDIA3</label>
    </interactant>
    <organismsDiffer>true</organismsDiffer>
    <experiments>2</experiments>
</comment>
<comment type="subcellular location">
    <subcellularLocation>
        <location evidence="8">Endoplasmic reticulum lumen</location>
    </subcellularLocation>
    <subcellularLocation>
        <location evidence="3">Cytoplasm</location>
        <location evidence="3">Cytosol</location>
    </subcellularLocation>
    <subcellularLocation>
        <location evidence="3">Secreted</location>
        <location evidence="3">Extracellular space</location>
        <location evidence="3">Extracellular matrix</location>
    </subcellularLocation>
    <subcellularLocation>
        <location evidence="3">Cell surface</location>
    </subcellularLocation>
    <subcellularLocation>
        <location evidence="4">Sarcoplasmic reticulum lumen</location>
    </subcellularLocation>
    <subcellularLocation>
        <location evidence="5">Cytoplasmic vesicle</location>
        <location evidence="5">Secretory vesicle</location>
        <location evidence="5">Cortical granule</location>
    </subcellularLocation>
    <subcellularLocation>
        <location evidence="3">Cytolytic granule</location>
    </subcellularLocation>
    <text evidence="3 4 5">Also found in cell surface (T cells), cytosol and extracellular matrix. During oocyte maturation and after parthenogenetic activation accumulates in cortical granules. In pronuclear and early cleaved embryos localizes weakly to cytoplasm around nucleus and more strongly in the region near the cortex (By similarity). In cortical granules of non-activated oocytes, is exocytosed during the cortical reaction in response to oocyte activation (By similarity).</text>
</comment>
<comment type="tissue specificity">
    <text evidence="8">Predentin and odontoblast.</text>
</comment>
<comment type="domain">
    <text evidence="1">Can be divided into a N-terminal globular domain, a proline-rich P-domain forming an elongated arm-like structure and a C-terminal acidic domain. The P-domain binds one molecule of calcium with high affinity, whereas the acidic C-domain binds multiple calcium ions with low affinity (By similarity).</text>
</comment>
<comment type="domain">
    <text evidence="1">The interaction with glycans occurs through a binding site in the globular lectin domain.</text>
</comment>
<comment type="domain">
    <text evidence="1">The zinc binding sites are localized to the N-domain.</text>
</comment>
<comment type="domain">
    <text>Associates with PDIA3 through the tip of the extended arm formed by the P-domain.</text>
</comment>
<comment type="similarity">
    <text evidence="12">Belongs to the calreticulin family.</text>
</comment>
<comment type="caution">
    <text evidence="12">Was originally (Ref.9) thought to be D-beta-hydroxybutyrate dehydrogenase.</text>
</comment>
<name>CALR_RAT</name>
<organism>
    <name type="scientific">Rattus norvegicus</name>
    <name type="common">Rat</name>
    <dbReference type="NCBI Taxonomy" id="10116"/>
    <lineage>
        <taxon>Eukaryota</taxon>
        <taxon>Metazoa</taxon>
        <taxon>Chordata</taxon>
        <taxon>Craniata</taxon>
        <taxon>Vertebrata</taxon>
        <taxon>Euteleostomi</taxon>
        <taxon>Mammalia</taxon>
        <taxon>Eutheria</taxon>
        <taxon>Euarchontoglires</taxon>
        <taxon>Glires</taxon>
        <taxon>Rodentia</taxon>
        <taxon>Myomorpha</taxon>
        <taxon>Muroidea</taxon>
        <taxon>Muridae</taxon>
        <taxon>Murinae</taxon>
        <taxon>Rattus</taxon>
    </lineage>
</organism>
<dbReference type="EMBL" id="X53363">
    <property type="protein sequence ID" value="CAA37446.1"/>
    <property type="molecule type" value="mRNA"/>
</dbReference>
<dbReference type="EMBL" id="D78308">
    <property type="protein sequence ID" value="BAA11345.1"/>
    <property type="molecule type" value="mRNA"/>
</dbReference>
<dbReference type="EMBL" id="X79327">
    <property type="protein sequence ID" value="CAA55890.1"/>
    <property type="molecule type" value="mRNA"/>
</dbReference>
<dbReference type="EMBL" id="BC062395">
    <property type="protein sequence ID" value="AAH62395.1"/>
    <property type="molecule type" value="mRNA"/>
</dbReference>
<dbReference type="EMBL" id="X13702">
    <property type="protein sequence ID" value="CAA31987.1"/>
    <property type="molecule type" value="mRNA"/>
</dbReference>
<dbReference type="PIR" id="JH0819">
    <property type="entry name" value="JH0819"/>
</dbReference>
<dbReference type="RefSeq" id="NP_071794.1">
    <property type="nucleotide sequence ID" value="NM_022399.2"/>
</dbReference>
<dbReference type="PDB" id="1HHN">
    <property type="method" value="NMR"/>
    <property type="chains" value="A=206-305"/>
</dbReference>
<dbReference type="PDB" id="1K91">
    <property type="method" value="NMR"/>
    <property type="chains" value="A=238-273"/>
</dbReference>
<dbReference type="PDB" id="1K9C">
    <property type="method" value="NMR"/>
    <property type="chains" value="A=206-278"/>
</dbReference>
<dbReference type="PDBsum" id="1HHN"/>
<dbReference type="PDBsum" id="1K91"/>
<dbReference type="PDBsum" id="1K9C"/>
<dbReference type="BMRB" id="P18418"/>
<dbReference type="SMR" id="P18418"/>
<dbReference type="BioGRID" id="249008">
    <property type="interactions" value="5"/>
</dbReference>
<dbReference type="CORUM" id="P18418"/>
<dbReference type="FunCoup" id="P18418">
    <property type="interactions" value="3356"/>
</dbReference>
<dbReference type="IntAct" id="P18418">
    <property type="interactions" value="9"/>
</dbReference>
<dbReference type="MINT" id="P18418"/>
<dbReference type="STRING" id="10116.ENSRNOP00000004091"/>
<dbReference type="iPTMnet" id="P18418"/>
<dbReference type="PhosphoSitePlus" id="P18418"/>
<dbReference type="SwissPalm" id="P18418"/>
<dbReference type="jPOST" id="P18418"/>
<dbReference type="PaxDb" id="10116-ENSRNOP00000004091"/>
<dbReference type="Ensembl" id="ENSRNOT00000113427.1">
    <property type="protein sequence ID" value="ENSRNOP00000080548.1"/>
    <property type="gene ID" value="ENSRNOG00000003029.7"/>
</dbReference>
<dbReference type="GeneID" id="64202"/>
<dbReference type="KEGG" id="rno:64202"/>
<dbReference type="AGR" id="RGD:620288"/>
<dbReference type="CTD" id="811"/>
<dbReference type="RGD" id="620288">
    <property type="gene designation" value="Calr"/>
</dbReference>
<dbReference type="eggNOG" id="KOG0674">
    <property type="taxonomic scope" value="Eukaryota"/>
</dbReference>
<dbReference type="GeneTree" id="ENSGT00950000182915"/>
<dbReference type="HOGENOM" id="CLU_018224_0_2_1"/>
<dbReference type="InParanoid" id="P18418"/>
<dbReference type="OMA" id="KRDEICA"/>
<dbReference type="OrthoDB" id="1938156at2759"/>
<dbReference type="PhylomeDB" id="P18418"/>
<dbReference type="TreeFam" id="TF338438"/>
<dbReference type="Reactome" id="R-RNO-1236974">
    <property type="pathway name" value="ER-Phagosome pathway"/>
</dbReference>
<dbReference type="Reactome" id="R-RNO-3000480">
    <property type="pathway name" value="Scavenging by Class A Receptors"/>
</dbReference>
<dbReference type="Reactome" id="R-RNO-901042">
    <property type="pathway name" value="Calnexin/calreticulin cycle"/>
</dbReference>
<dbReference type="Reactome" id="R-RNO-983170">
    <property type="pathway name" value="Antigen Presentation: Folding, assembly and peptide loading of class I MHC"/>
</dbReference>
<dbReference type="EvolutionaryTrace" id="P18418"/>
<dbReference type="PRO" id="PR:P18418"/>
<dbReference type="Proteomes" id="UP000002494">
    <property type="component" value="Chromosome 19"/>
</dbReference>
<dbReference type="Bgee" id="ENSRNOG00000003029">
    <property type="expression patterns" value="Expressed in ovary and 20 other cell types or tissues"/>
</dbReference>
<dbReference type="GO" id="GO:0001669">
    <property type="term" value="C:acrosomal vesicle"/>
    <property type="evidence" value="ECO:0000314"/>
    <property type="project" value="RGD"/>
</dbReference>
<dbReference type="GO" id="GO:0009986">
    <property type="term" value="C:cell surface"/>
    <property type="evidence" value="ECO:0000314"/>
    <property type="project" value="RGD"/>
</dbReference>
<dbReference type="GO" id="GO:0060473">
    <property type="term" value="C:cortical granule"/>
    <property type="evidence" value="ECO:0000250"/>
    <property type="project" value="UniProtKB"/>
</dbReference>
<dbReference type="GO" id="GO:0044194">
    <property type="term" value="C:cytolytic granule"/>
    <property type="evidence" value="ECO:0007669"/>
    <property type="project" value="UniProtKB-SubCell"/>
</dbReference>
<dbReference type="GO" id="GO:0005737">
    <property type="term" value="C:cytoplasm"/>
    <property type="evidence" value="ECO:0000266"/>
    <property type="project" value="RGD"/>
</dbReference>
<dbReference type="GO" id="GO:0005829">
    <property type="term" value="C:cytosol"/>
    <property type="evidence" value="ECO:0000266"/>
    <property type="project" value="RGD"/>
</dbReference>
<dbReference type="GO" id="GO:0005783">
    <property type="term" value="C:endoplasmic reticulum"/>
    <property type="evidence" value="ECO:0000314"/>
    <property type="project" value="MGI"/>
</dbReference>
<dbReference type="GO" id="GO:0005788">
    <property type="term" value="C:endoplasmic reticulum lumen"/>
    <property type="evidence" value="ECO:0000266"/>
    <property type="project" value="RGD"/>
</dbReference>
<dbReference type="GO" id="GO:0005789">
    <property type="term" value="C:endoplasmic reticulum membrane"/>
    <property type="evidence" value="ECO:0000318"/>
    <property type="project" value="GO_Central"/>
</dbReference>
<dbReference type="GO" id="GO:0044322">
    <property type="term" value="C:endoplasmic reticulum quality control compartment"/>
    <property type="evidence" value="ECO:0000266"/>
    <property type="project" value="RGD"/>
</dbReference>
<dbReference type="GO" id="GO:0009897">
    <property type="term" value="C:external side of plasma membrane"/>
    <property type="evidence" value="ECO:0000266"/>
    <property type="project" value="RGD"/>
</dbReference>
<dbReference type="GO" id="GO:0005615">
    <property type="term" value="C:extracellular space"/>
    <property type="evidence" value="ECO:0000314"/>
    <property type="project" value="RGD"/>
</dbReference>
<dbReference type="GO" id="GO:0098978">
    <property type="term" value="C:glutamatergic synapse"/>
    <property type="evidence" value="ECO:0000314"/>
    <property type="project" value="SynGO"/>
</dbReference>
<dbReference type="GO" id="GO:0016020">
    <property type="term" value="C:membrane"/>
    <property type="evidence" value="ECO:0000266"/>
    <property type="project" value="RGD"/>
</dbReference>
<dbReference type="GO" id="GO:0042824">
    <property type="term" value="C:MHC class I peptide loading complex"/>
    <property type="evidence" value="ECO:0000266"/>
    <property type="project" value="RGD"/>
</dbReference>
<dbReference type="GO" id="GO:0005739">
    <property type="term" value="C:mitochondrion"/>
    <property type="evidence" value="ECO:0000314"/>
    <property type="project" value="FlyBase"/>
</dbReference>
<dbReference type="GO" id="GO:0005635">
    <property type="term" value="C:nuclear envelope"/>
    <property type="evidence" value="ECO:0000314"/>
    <property type="project" value="RGD"/>
</dbReference>
<dbReference type="GO" id="GO:0005634">
    <property type="term" value="C:nucleus"/>
    <property type="evidence" value="ECO:0000266"/>
    <property type="project" value="RGD"/>
</dbReference>
<dbReference type="GO" id="GO:0048471">
    <property type="term" value="C:perinuclear region of cytoplasm"/>
    <property type="evidence" value="ECO:0000314"/>
    <property type="project" value="RGD"/>
</dbReference>
<dbReference type="GO" id="GO:0098794">
    <property type="term" value="C:postsynapse"/>
    <property type="evidence" value="ECO:0000314"/>
    <property type="project" value="SynGO"/>
</dbReference>
<dbReference type="GO" id="GO:0032991">
    <property type="term" value="C:protein-containing complex"/>
    <property type="evidence" value="ECO:0000314"/>
    <property type="project" value="RGD"/>
</dbReference>
<dbReference type="GO" id="GO:0005840">
    <property type="term" value="C:ribosome"/>
    <property type="evidence" value="ECO:0000266"/>
    <property type="project" value="RGD"/>
</dbReference>
<dbReference type="GO" id="GO:0016529">
    <property type="term" value="C:sarcoplasmic reticulum"/>
    <property type="evidence" value="ECO:0000314"/>
    <property type="project" value="RGD"/>
</dbReference>
<dbReference type="GO" id="GO:0033018">
    <property type="term" value="C:sarcoplasmic reticulum lumen"/>
    <property type="evidence" value="ECO:0007669"/>
    <property type="project" value="UniProtKB-SubCell"/>
</dbReference>
<dbReference type="GO" id="GO:0005790">
    <property type="term" value="C:smooth endoplasmic reticulum"/>
    <property type="evidence" value="ECO:0000314"/>
    <property type="project" value="UniProtKB"/>
</dbReference>
<dbReference type="GO" id="GO:0005509">
    <property type="term" value="F:calcium ion binding"/>
    <property type="evidence" value="ECO:0000314"/>
    <property type="project" value="RGD"/>
</dbReference>
<dbReference type="GO" id="GO:0030246">
    <property type="term" value="F:carbohydrate binding"/>
    <property type="evidence" value="ECO:0000266"/>
    <property type="project" value="RGD"/>
</dbReference>
<dbReference type="GO" id="GO:0001849">
    <property type="term" value="F:complement component C1q complex binding"/>
    <property type="evidence" value="ECO:0000266"/>
    <property type="project" value="RGD"/>
</dbReference>
<dbReference type="GO" id="GO:0042562">
    <property type="term" value="F:hormone binding"/>
    <property type="evidence" value="ECO:0000353"/>
    <property type="project" value="RGD"/>
</dbReference>
<dbReference type="GO" id="GO:0005178">
    <property type="term" value="F:integrin binding"/>
    <property type="evidence" value="ECO:0000266"/>
    <property type="project" value="RGD"/>
</dbReference>
<dbReference type="GO" id="GO:0005506">
    <property type="term" value="F:iron ion binding"/>
    <property type="evidence" value="ECO:0000314"/>
    <property type="project" value="RGD"/>
</dbReference>
<dbReference type="GO" id="GO:0140313">
    <property type="term" value="F:molecular sequestering activity"/>
    <property type="evidence" value="ECO:0000266"/>
    <property type="project" value="RGD"/>
</dbReference>
<dbReference type="GO" id="GO:0003729">
    <property type="term" value="F:mRNA binding"/>
    <property type="evidence" value="ECO:0000314"/>
    <property type="project" value="BHF-UCL"/>
</dbReference>
<dbReference type="GO" id="GO:0050681">
    <property type="term" value="F:nuclear androgen receptor binding"/>
    <property type="evidence" value="ECO:0000266"/>
    <property type="project" value="RGD"/>
</dbReference>
<dbReference type="GO" id="GO:0005049">
    <property type="term" value="F:nuclear export signal receptor activity"/>
    <property type="evidence" value="ECO:0000266"/>
    <property type="project" value="RGD"/>
</dbReference>
<dbReference type="GO" id="GO:0042277">
    <property type="term" value="F:peptide binding"/>
    <property type="evidence" value="ECO:0000314"/>
    <property type="project" value="RGD"/>
</dbReference>
<dbReference type="GO" id="GO:0044183">
    <property type="term" value="F:protein folding chaperone"/>
    <property type="evidence" value="ECO:0000266"/>
    <property type="project" value="RGD"/>
</dbReference>
<dbReference type="GO" id="GO:0031625">
    <property type="term" value="F:ubiquitin protein ligase binding"/>
    <property type="evidence" value="ECO:0000266"/>
    <property type="project" value="RGD"/>
</dbReference>
<dbReference type="GO" id="GO:0051082">
    <property type="term" value="F:unfolded protein binding"/>
    <property type="evidence" value="ECO:0007669"/>
    <property type="project" value="InterPro"/>
</dbReference>
<dbReference type="GO" id="GO:0055007">
    <property type="term" value="P:cardiac muscle cell differentiation"/>
    <property type="evidence" value="ECO:0000270"/>
    <property type="project" value="RGD"/>
</dbReference>
<dbReference type="GO" id="GO:0071257">
    <property type="term" value="P:cellular response to electrical stimulus"/>
    <property type="evidence" value="ECO:0000270"/>
    <property type="project" value="RGD"/>
</dbReference>
<dbReference type="GO" id="GO:0071285">
    <property type="term" value="P:cellular response to lithium ion"/>
    <property type="evidence" value="ECO:0000270"/>
    <property type="project" value="RGD"/>
</dbReference>
<dbReference type="GO" id="GO:0098586">
    <property type="term" value="P:cellular response to virus"/>
    <property type="evidence" value="ECO:0000270"/>
    <property type="project" value="RGD"/>
</dbReference>
<dbReference type="GO" id="GO:0090398">
    <property type="term" value="P:cellular senescence"/>
    <property type="evidence" value="ECO:0000266"/>
    <property type="project" value="RGD"/>
</dbReference>
<dbReference type="GO" id="GO:0030866">
    <property type="term" value="P:cortical actin cytoskeleton organization"/>
    <property type="evidence" value="ECO:0000266"/>
    <property type="project" value="RGD"/>
</dbReference>
<dbReference type="GO" id="GO:0036503">
    <property type="term" value="P:ERAD pathway"/>
    <property type="evidence" value="ECO:0000318"/>
    <property type="project" value="GO_Central"/>
</dbReference>
<dbReference type="GO" id="GO:0045892">
    <property type="term" value="P:negative regulation of DNA-templated transcription"/>
    <property type="evidence" value="ECO:0000266"/>
    <property type="project" value="RGD"/>
</dbReference>
<dbReference type="GO" id="GO:0033144">
    <property type="term" value="P:negative regulation of intracellular steroid hormone receptor signaling pathway"/>
    <property type="evidence" value="ECO:0000266"/>
    <property type="project" value="RGD"/>
</dbReference>
<dbReference type="GO" id="GO:0045665">
    <property type="term" value="P:negative regulation of neuron differentiation"/>
    <property type="evidence" value="ECO:0000266"/>
    <property type="project" value="RGD"/>
</dbReference>
<dbReference type="GO" id="GO:0048387">
    <property type="term" value="P:negative regulation of retinoic acid receptor signaling pathway"/>
    <property type="evidence" value="ECO:0000266"/>
    <property type="project" value="RGD"/>
</dbReference>
<dbReference type="GO" id="GO:0000122">
    <property type="term" value="P:negative regulation of transcription by RNA polymerase II"/>
    <property type="evidence" value="ECO:0000266"/>
    <property type="project" value="RGD"/>
</dbReference>
<dbReference type="GO" id="GO:0017148">
    <property type="term" value="P:negative regulation of translation"/>
    <property type="evidence" value="ECO:0000266"/>
    <property type="project" value="RGD"/>
</dbReference>
<dbReference type="GO" id="GO:1901164">
    <property type="term" value="P:negative regulation of trophoblast cell migration"/>
    <property type="evidence" value="ECO:0000266"/>
    <property type="project" value="RGD"/>
</dbReference>
<dbReference type="GO" id="GO:0002502">
    <property type="term" value="P:peptide antigen assembly with MHC class I protein complex"/>
    <property type="evidence" value="ECO:0000266"/>
    <property type="project" value="RGD"/>
</dbReference>
<dbReference type="GO" id="GO:0045787">
    <property type="term" value="P:positive regulation of cell cycle"/>
    <property type="evidence" value="ECO:0000266"/>
    <property type="project" value="RGD"/>
</dbReference>
<dbReference type="GO" id="GO:0008284">
    <property type="term" value="P:positive regulation of cell population proliferation"/>
    <property type="evidence" value="ECO:0000266"/>
    <property type="project" value="RGD"/>
</dbReference>
<dbReference type="GO" id="GO:2000510">
    <property type="term" value="P:positive regulation of dendritic cell chemotaxis"/>
    <property type="evidence" value="ECO:0000266"/>
    <property type="project" value="RGD"/>
</dbReference>
<dbReference type="GO" id="GO:0010595">
    <property type="term" value="P:positive regulation of endothelial cell migration"/>
    <property type="evidence" value="ECO:0000266"/>
    <property type="project" value="RGD"/>
</dbReference>
<dbReference type="GO" id="GO:0010628">
    <property type="term" value="P:positive regulation of gene expression"/>
    <property type="evidence" value="ECO:0000266"/>
    <property type="project" value="RGD"/>
</dbReference>
<dbReference type="GO" id="GO:1901224">
    <property type="term" value="P:positive regulation of non-canonical NF-kappaB signal transduction"/>
    <property type="evidence" value="ECO:0000266"/>
    <property type="project" value="RGD"/>
</dbReference>
<dbReference type="GO" id="GO:0050766">
    <property type="term" value="P:positive regulation of phagocytosis"/>
    <property type="evidence" value="ECO:0000266"/>
    <property type="project" value="RGD"/>
</dbReference>
<dbReference type="GO" id="GO:1900026">
    <property type="term" value="P:positive regulation of substrate adhesion-dependent cell spreading"/>
    <property type="evidence" value="ECO:0000266"/>
    <property type="project" value="RGD"/>
</dbReference>
<dbReference type="GO" id="GO:0006611">
    <property type="term" value="P:protein export from nucleus"/>
    <property type="evidence" value="ECO:0000266"/>
    <property type="project" value="RGD"/>
</dbReference>
<dbReference type="GO" id="GO:0006457">
    <property type="term" value="P:protein folding"/>
    <property type="evidence" value="ECO:0000266"/>
    <property type="project" value="RGD"/>
</dbReference>
<dbReference type="GO" id="GO:0034504">
    <property type="term" value="P:protein localization to nucleus"/>
    <property type="evidence" value="ECO:0000266"/>
    <property type="project" value="RGD"/>
</dbReference>
<dbReference type="GO" id="GO:0051604">
    <property type="term" value="P:protein maturation"/>
    <property type="evidence" value="ECO:0000266"/>
    <property type="project" value="RGD"/>
</dbReference>
<dbReference type="GO" id="GO:0050821">
    <property type="term" value="P:protein stabilization"/>
    <property type="evidence" value="ECO:0000250"/>
    <property type="project" value="UniProtKB"/>
</dbReference>
<dbReference type="GO" id="GO:0040020">
    <property type="term" value="P:regulation of meiotic nuclear division"/>
    <property type="evidence" value="ECO:0000266"/>
    <property type="project" value="RGD"/>
</dbReference>
<dbReference type="GO" id="GO:1904614">
    <property type="term" value="P:response to biphenyl"/>
    <property type="evidence" value="ECO:0000270"/>
    <property type="project" value="RGD"/>
</dbReference>
<dbReference type="GO" id="GO:0032355">
    <property type="term" value="P:response to estradiol"/>
    <property type="evidence" value="ECO:0000270"/>
    <property type="project" value="RGD"/>
</dbReference>
<dbReference type="GO" id="GO:1903416">
    <property type="term" value="P:response to glycoside"/>
    <property type="evidence" value="ECO:0000270"/>
    <property type="project" value="RGD"/>
</dbReference>
<dbReference type="GO" id="GO:1901652">
    <property type="term" value="P:response to peptide"/>
    <property type="evidence" value="ECO:0000270"/>
    <property type="project" value="RGD"/>
</dbReference>
<dbReference type="GO" id="GO:0033574">
    <property type="term" value="P:response to testosterone"/>
    <property type="evidence" value="ECO:0000270"/>
    <property type="project" value="RGD"/>
</dbReference>
<dbReference type="GO" id="GO:0009410">
    <property type="term" value="P:response to xenobiotic stimulus"/>
    <property type="evidence" value="ECO:0000270"/>
    <property type="project" value="RGD"/>
</dbReference>
<dbReference type="GO" id="GO:0007283">
    <property type="term" value="P:spermatogenesis"/>
    <property type="evidence" value="ECO:0000270"/>
    <property type="project" value="RGD"/>
</dbReference>
<dbReference type="FunFam" id="2.10.250.10:FF:000002">
    <property type="entry name" value="Calreticulin"/>
    <property type="match status" value="1"/>
</dbReference>
<dbReference type="FunFam" id="2.60.120.200:FF:000122">
    <property type="entry name" value="Calreticulin 3"/>
    <property type="match status" value="1"/>
</dbReference>
<dbReference type="Gene3D" id="2.60.120.200">
    <property type="match status" value="1"/>
</dbReference>
<dbReference type="Gene3D" id="2.10.250.10">
    <property type="entry name" value="Calreticulin/calnexin, P domain"/>
    <property type="match status" value="1"/>
</dbReference>
<dbReference type="InterPro" id="IPR001580">
    <property type="entry name" value="Calret/calnex"/>
</dbReference>
<dbReference type="InterPro" id="IPR018124">
    <property type="entry name" value="Calret/calnex_CS"/>
</dbReference>
<dbReference type="InterPro" id="IPR009169">
    <property type="entry name" value="Calreticulin"/>
</dbReference>
<dbReference type="InterPro" id="IPR009033">
    <property type="entry name" value="Calreticulin/calnexin_P_dom_sf"/>
</dbReference>
<dbReference type="InterPro" id="IPR013320">
    <property type="entry name" value="ConA-like_dom_sf"/>
</dbReference>
<dbReference type="PANTHER" id="PTHR11073:SF16">
    <property type="entry name" value="CALRETICULIN"/>
    <property type="match status" value="1"/>
</dbReference>
<dbReference type="PANTHER" id="PTHR11073">
    <property type="entry name" value="CALRETICULIN AND CALNEXIN"/>
    <property type="match status" value="1"/>
</dbReference>
<dbReference type="Pfam" id="PF00262">
    <property type="entry name" value="Calreticulin"/>
    <property type="match status" value="2"/>
</dbReference>
<dbReference type="PIRSF" id="PIRSF002356">
    <property type="entry name" value="Calreticulin"/>
    <property type="match status" value="1"/>
</dbReference>
<dbReference type="PRINTS" id="PR00626">
    <property type="entry name" value="CALRETICULIN"/>
</dbReference>
<dbReference type="SUPFAM" id="SSF49899">
    <property type="entry name" value="Concanavalin A-like lectins/glucanases"/>
    <property type="match status" value="1"/>
</dbReference>
<dbReference type="SUPFAM" id="SSF63887">
    <property type="entry name" value="P-domain of calnexin/calreticulin"/>
    <property type="match status" value="1"/>
</dbReference>
<dbReference type="PROSITE" id="PS00803">
    <property type="entry name" value="CALRETICULIN_1"/>
    <property type="match status" value="1"/>
</dbReference>
<dbReference type="PROSITE" id="PS00804">
    <property type="entry name" value="CALRETICULIN_2"/>
    <property type="match status" value="1"/>
</dbReference>
<dbReference type="PROSITE" id="PS00805">
    <property type="entry name" value="CALRETICULIN_REPEAT"/>
    <property type="match status" value="3"/>
</dbReference>
<dbReference type="PROSITE" id="PS00014">
    <property type="entry name" value="ER_TARGET"/>
    <property type="match status" value="1"/>
</dbReference>
<sequence length="416" mass="47995">MLLSVPLLLGLLGLAAADPAIYFKEQFLDGDAWTNRWVESKHKSDFGKFVLSSGKFYGDQEKDKGLQTSQDARFYALSARFEPFSNKGQTLVVQFTVKHEQNIDCGGGYVKLFPGGLDQKDMHGDSEYNIMFGPDICGPGTKKVHVIFNYKGKNVLINKDIRCKDDEFTHLYTLIVRPDNTYEVKIDNSQVESGSLEDDWDFLPPKKIKDPDAAKPEDWDERAKIDDPTDSKPEDWDKPEHIPDPDAKKPEDWDEEMDGEWEPPVIQNPEYKGEWKPRQIDNPDYKGTWIHPEIDNPEYSPDANIYAYDSFAVLGLDLWQVKSGTIFDNFLITNDEAYAEEFGNETWGVTKAAEKQMKDKQDEEQRLKEEEEDKKRKEEEEAEDKEDEDDRDEDEDEEDEKEEDEEDATGQAKDEL</sequence>
<evidence type="ECO:0000250" key="1"/>
<evidence type="ECO:0000250" key="2">
    <source>
        <dbReference type="UniProtKB" id="P14211"/>
    </source>
</evidence>
<evidence type="ECO:0000250" key="3">
    <source>
        <dbReference type="UniProtKB" id="P27797"/>
    </source>
</evidence>
<evidence type="ECO:0000250" key="4">
    <source>
        <dbReference type="UniProtKB" id="P28491"/>
    </source>
</evidence>
<evidence type="ECO:0000250" key="5">
    <source>
        <dbReference type="UniProtKB" id="Q8K3H7"/>
    </source>
</evidence>
<evidence type="ECO:0000256" key="6">
    <source>
        <dbReference type="SAM" id="MobiDB-lite"/>
    </source>
</evidence>
<evidence type="ECO:0000269" key="7">
    <source>
    </source>
</evidence>
<evidence type="ECO:0000269" key="8">
    <source>
    </source>
</evidence>
<evidence type="ECO:0000269" key="9">
    <source>
    </source>
</evidence>
<evidence type="ECO:0000269" key="10">
    <source>
    </source>
</evidence>
<evidence type="ECO:0000269" key="11">
    <source>
    </source>
</evidence>
<evidence type="ECO:0000305" key="12"/>
<evidence type="ECO:0007829" key="13">
    <source>
        <dbReference type="PDB" id="1HHN"/>
    </source>
</evidence>
<evidence type="ECO:0007829" key="14">
    <source>
        <dbReference type="PDB" id="1K9C"/>
    </source>
</evidence>
<protein>
    <recommendedName>
        <fullName>Calreticulin</fullName>
    </recommendedName>
    <alternativeName>
        <fullName>CALBP</fullName>
    </alternativeName>
    <alternativeName>
        <fullName>CRP55</fullName>
    </alternativeName>
    <alternativeName>
        <fullName>Calcium-binding protein 3</fullName>
        <shortName>CABP3</shortName>
    </alternativeName>
    <alternativeName>
        <fullName>Calregulin</fullName>
    </alternativeName>
    <alternativeName>
        <fullName>Endoplasmic reticulum resident protein 60</fullName>
        <shortName>ERp60</shortName>
    </alternativeName>
    <alternativeName>
        <fullName>HACBP</fullName>
    </alternativeName>
</protein>
<reference key="1">
    <citation type="journal article" date="1990" name="Nucleic Acids Res.">
        <title>Structural homology between the rat calreticulin gene product and the Onchocerca volvulus antigen Ral-1.</title>
        <authorList>
            <person name="Murthy K.K."/>
            <person name="Banville D."/>
            <person name="Srikant C.B."/>
            <person name="Carrier F."/>
            <person name="Bell A."/>
            <person name="Holmes C."/>
            <person name="Patel Y.C."/>
        </authorList>
    </citation>
    <scope>NUCLEOTIDE SEQUENCE [MRNA]</scope>
    <source>
        <strain>Sprague-Dawley</strain>
        <tissue>Brain cortex</tissue>
    </source>
</reference>
<reference key="2">
    <citation type="journal article" date="1993" name="Exp. Cell Res.">
        <title>An endoplasmic reticulum protein, calreticulin, is transported into the acrosome of rat sperm.</title>
        <authorList>
            <person name="Nakamura M."/>
            <person name="Moriya M."/>
            <person name="Baba T."/>
            <person name="Michikawa Y."/>
            <person name="Yamanobe T."/>
            <person name="Arai K."/>
            <person name="Okinaga S."/>
            <person name="Kobayashi T."/>
        </authorList>
    </citation>
    <scope>NUCLEOTIDE SEQUENCE [MRNA]</scope>
    <source>
        <strain>Sprague-Dawley</strain>
    </source>
</reference>
<reference key="3">
    <citation type="journal article" date="1994" name="J. Cell Sci.">
        <title>Retention and retrieval: both mechanisms cooperate to maintain calreticulin in the endoplasmic reticulum.</title>
        <authorList>
            <person name="Soennichsen B."/>
            <person name="Fuellekrug J."/>
            <person name="van Nguyen P."/>
            <person name="Diekmann W."/>
            <person name="Robinson D.G."/>
            <person name="Mieskes G."/>
        </authorList>
    </citation>
    <scope>NUCLEOTIDE SEQUENCE [MRNA]</scope>
    <source>
        <strain>Sprague-Dawley</strain>
        <tissue>Liver</tissue>
    </source>
</reference>
<reference key="4">
    <citation type="journal article" date="2004" name="Genome Res.">
        <title>The status, quality, and expansion of the NIH full-length cDNA project: the Mammalian Gene Collection (MGC).</title>
        <authorList>
            <consortium name="The MGC Project Team"/>
        </authorList>
    </citation>
    <scope>NUCLEOTIDE SEQUENCE [LARGE SCALE MRNA]</scope>
    <source>
        <tissue>Prostate</tissue>
    </source>
</reference>
<reference key="5">
    <citation type="journal article" date="1992" name="Biochem. Biophys. Res. Commun.">
        <title>Calreticulin is present in the acrosome of spermatids of rat testis.</title>
        <authorList>
            <person name="Nakamura M."/>
            <person name="Michikawa Y."/>
            <person name="Baba T."/>
            <person name="Okinaga S."/>
            <person name="Arai K."/>
        </authorList>
    </citation>
    <scope>PROTEIN SEQUENCE OF 18-32</scope>
    <source>
        <strain>Sprague-Dawley</strain>
        <tissue>Testis</tissue>
    </source>
</reference>
<reference key="6">
    <citation type="journal article" date="1993" name="Biochim. Biophys. Acta">
        <title>Identification of protein disulfide isomerase and calreticulin as autoimmune antigens in LEC strain of rats.</title>
        <authorList>
            <person name="Yokoi T."/>
            <person name="Nagayama S."/>
            <person name="Kajiwara R."/>
            <person name="Kawaguchi Y."/>
            <person name="Horiuchi R."/>
            <person name="Kamataki T."/>
        </authorList>
    </citation>
    <scope>PROTEIN SEQUENCE OF 18-32</scope>
    <source>
        <strain>LEC</strain>
        <tissue>Liver</tissue>
    </source>
</reference>
<reference key="7">
    <citation type="journal article" date="1990" name="Biochem. J.">
        <title>Calreticulin is a candidate for a calsequestrin-like function in Ca2(+)-storage compartments (calciosomes) of liver and brain.</title>
        <authorList>
            <person name="Treves S."/>
            <person name="de Mattei M."/>
            <person name="Lanfredi M."/>
            <person name="Villa A."/>
            <person name="Green N.M."/>
            <person name="Maclennan D.H."/>
            <person name="Meldolesi J."/>
            <person name="Pozzan T."/>
        </authorList>
    </citation>
    <scope>PROTEIN SEQUENCE OF 18-29</scope>
</reference>
<reference key="8">
    <citation type="submission" date="2007-04" db="UniProtKB">
        <authorList>
            <person name="Lubec G."/>
            <person name="Afjehi-Sadat L."/>
            <person name="Diao W."/>
        </authorList>
    </citation>
    <scope>PROTEIN SEQUENCE OF 25-36; 88-98 AND 163-185</scope>
    <scope>IDENTIFICATION BY MASS SPECTROMETRY</scope>
    <source>
        <strain>Sprague-Dawley</strain>
        <tissue>Hippocampus</tissue>
        <tissue>Spinal cord</tissue>
    </source>
</reference>
<reference key="9">
    <citation type="submission" date="1988-12" db="EMBL/GenBank/DDBJ databases">
        <authorList>
            <person name="Lone Y.-C."/>
            <person name="Bailly A."/>
            <person name="Latruffe N."/>
        </authorList>
    </citation>
    <scope>NUCLEOTIDE SEQUENCE [MRNA] OF 269-361</scope>
    <source>
        <strain>Sprague-Dawley</strain>
    </source>
</reference>
<reference key="10">
    <citation type="journal article" date="2003" name="Matrix Biol.">
        <title>Calreticulin -- an endoplasmic reticulum protein with calcium-binding activity is also found in the extracellular matrix.</title>
        <authorList>
            <person name="Somogyi E."/>
            <person name="Petersson U."/>
            <person name="Hultenby K."/>
            <person name="Wendel M."/>
        </authorList>
    </citation>
    <scope>TISSUE SPECIFICITY</scope>
    <scope>SUBCELLULAR LOCATION</scope>
</reference>
<reference key="11">
    <citation type="journal article" date="2002" name="Proc. Natl. Acad. Sci. U.S.A.">
        <title>TROSY-NMR reveals interaction between ERp57 and the tip of the calreticulin P-domain.</title>
        <authorList>
            <person name="Frickel E.M."/>
            <person name="Riek R."/>
            <person name="Jelesarov I."/>
            <person name="Helenius A."/>
            <person name="Wuethrich K."/>
            <person name="Ellgaard L."/>
        </authorList>
    </citation>
    <scope>INTERACTION WITH PDIA3</scope>
</reference>
<reference key="12">
    <citation type="journal article" date="2001" name="Proc. Natl. Acad. Sci. U.S.A.">
        <title>NMR structure of the calreticulin P-domain.</title>
        <authorList>
            <person name="Ellgaard L."/>
            <person name="Riek R."/>
            <person name="Herrmann T."/>
            <person name="Guntert P."/>
            <person name="Braun D."/>
            <person name="Helenius A."/>
            <person name="Wuthrich K."/>
        </authorList>
    </citation>
    <scope>STRUCTURE BY NMR OF 206-305</scope>
</reference>
<reference key="13">
    <citation type="journal article" date="2002" name="J. Mol. Biol.">
        <title>NMR structures of 36 and 73-residue fragments of the calreticulin P-domain.</title>
        <authorList>
            <person name="Ellgaard L."/>
            <person name="Bettendorff P."/>
            <person name="Braun D."/>
            <person name="Herrmann T."/>
            <person name="Fiorito F."/>
            <person name="Jelesarov I."/>
            <person name="Guntert P."/>
            <person name="Helenius A."/>
            <person name="Wuthrich K."/>
        </authorList>
    </citation>
    <scope>STRUCTURE BY NMR OF 206-278</scope>
</reference>